<evidence type="ECO:0000255" key="1">
    <source>
        <dbReference type="HAMAP-Rule" id="MF_00083"/>
    </source>
</evidence>
<comment type="function">
    <text evidence="1">Hydrolyzes ribosome-free peptidyl-tRNAs (with 1 or more amino acids incorporated), which drop off the ribosome during protein synthesis, or as a result of ribosome stalling.</text>
</comment>
<comment type="function">
    <text evidence="1">Catalyzes the release of premature peptidyl moieties from peptidyl-tRNA molecules trapped in stalled 50S ribosomal subunits, and thus maintains levels of free tRNAs and 50S ribosomes.</text>
</comment>
<comment type="catalytic activity">
    <reaction evidence="1">
        <text>an N-acyl-L-alpha-aminoacyl-tRNA + H2O = an N-acyl-L-amino acid + a tRNA + H(+)</text>
        <dbReference type="Rhea" id="RHEA:54448"/>
        <dbReference type="Rhea" id="RHEA-COMP:10123"/>
        <dbReference type="Rhea" id="RHEA-COMP:13883"/>
        <dbReference type="ChEBI" id="CHEBI:15377"/>
        <dbReference type="ChEBI" id="CHEBI:15378"/>
        <dbReference type="ChEBI" id="CHEBI:59874"/>
        <dbReference type="ChEBI" id="CHEBI:78442"/>
        <dbReference type="ChEBI" id="CHEBI:138191"/>
        <dbReference type="EC" id="3.1.1.29"/>
    </reaction>
</comment>
<comment type="subunit">
    <text evidence="1">Monomer.</text>
</comment>
<comment type="subcellular location">
    <subcellularLocation>
        <location evidence="1">Cytoplasm</location>
    </subcellularLocation>
</comment>
<comment type="similarity">
    <text evidence="1">Belongs to the PTH family.</text>
</comment>
<feature type="chain" id="PRO_1000010637" description="Peptidyl-tRNA hydrolase">
    <location>
        <begin position="1"/>
        <end position="201"/>
    </location>
</feature>
<feature type="active site" description="Proton acceptor" evidence="1">
    <location>
        <position position="19"/>
    </location>
</feature>
<feature type="binding site" evidence="1">
    <location>
        <position position="14"/>
    </location>
    <ligand>
        <name>tRNA</name>
        <dbReference type="ChEBI" id="CHEBI:17843"/>
    </ligand>
</feature>
<feature type="binding site" evidence="1">
    <location>
        <position position="64"/>
    </location>
    <ligand>
        <name>tRNA</name>
        <dbReference type="ChEBI" id="CHEBI:17843"/>
    </ligand>
</feature>
<feature type="binding site" evidence="1">
    <location>
        <position position="66"/>
    </location>
    <ligand>
        <name>tRNA</name>
        <dbReference type="ChEBI" id="CHEBI:17843"/>
    </ligand>
</feature>
<feature type="binding site" evidence="1">
    <location>
        <position position="112"/>
    </location>
    <ligand>
        <name>tRNA</name>
        <dbReference type="ChEBI" id="CHEBI:17843"/>
    </ligand>
</feature>
<feature type="site" description="Discriminates between blocked and unblocked aminoacyl-tRNA" evidence="1">
    <location>
        <position position="9"/>
    </location>
</feature>
<feature type="site" description="Stabilizes the basic form of H active site to accept a proton" evidence="1">
    <location>
        <position position="91"/>
    </location>
</feature>
<accession>Q07RP6</accession>
<organism>
    <name type="scientific">Rhodopseudomonas palustris (strain BisA53)</name>
    <dbReference type="NCBI Taxonomy" id="316055"/>
    <lineage>
        <taxon>Bacteria</taxon>
        <taxon>Pseudomonadati</taxon>
        <taxon>Pseudomonadota</taxon>
        <taxon>Alphaproteobacteria</taxon>
        <taxon>Hyphomicrobiales</taxon>
        <taxon>Nitrobacteraceae</taxon>
        <taxon>Rhodopseudomonas</taxon>
    </lineage>
</organism>
<reference key="1">
    <citation type="submission" date="2006-09" db="EMBL/GenBank/DDBJ databases">
        <title>Complete sequence of Rhodopseudomonas palustris BisA53.</title>
        <authorList>
            <consortium name="US DOE Joint Genome Institute"/>
            <person name="Copeland A."/>
            <person name="Lucas S."/>
            <person name="Lapidus A."/>
            <person name="Barry K."/>
            <person name="Detter J.C."/>
            <person name="Glavina del Rio T."/>
            <person name="Hammon N."/>
            <person name="Israni S."/>
            <person name="Dalin E."/>
            <person name="Tice H."/>
            <person name="Pitluck S."/>
            <person name="Chain P."/>
            <person name="Malfatti S."/>
            <person name="Shin M."/>
            <person name="Vergez L."/>
            <person name="Schmutz J."/>
            <person name="Larimer F."/>
            <person name="Land M."/>
            <person name="Hauser L."/>
            <person name="Pelletier D.A."/>
            <person name="Kyrpides N."/>
            <person name="Kim E."/>
            <person name="Harwood C.S."/>
            <person name="Oda Y."/>
            <person name="Richardson P."/>
        </authorList>
    </citation>
    <scope>NUCLEOTIDE SEQUENCE [LARGE SCALE GENOMIC DNA]</scope>
    <source>
        <strain>BisA53</strain>
    </source>
</reference>
<name>PTH_RHOP5</name>
<sequence length="201" mass="21987">MRLLVGLGNPGAKYQGNRHNIGFMALDEIARRHGFSPWRRRFQGETADGSIGGERVTLLKPLTFMNDSGRAVQDAASFFKLGLPEIIVLHDEIELPAAKLRVKVGGGIAGHNGLRSISAHIGNEYRRVRIGVGHPGVKELVHGHVLNDFAKAERPWVEAMLEAITDNADLLVGDRDSQFQNKVHLALQAKGFLDKSDNGAK</sequence>
<keyword id="KW-0963">Cytoplasm</keyword>
<keyword id="KW-0378">Hydrolase</keyword>
<keyword id="KW-0694">RNA-binding</keyword>
<keyword id="KW-0820">tRNA-binding</keyword>
<gene>
    <name evidence="1" type="primary">pth</name>
    <name type="ordered locus">RPE_1438</name>
</gene>
<protein>
    <recommendedName>
        <fullName evidence="1">Peptidyl-tRNA hydrolase</fullName>
        <shortName evidence="1">Pth</shortName>
        <ecNumber evidence="1">3.1.1.29</ecNumber>
    </recommendedName>
</protein>
<proteinExistence type="inferred from homology"/>
<dbReference type="EC" id="3.1.1.29" evidence="1"/>
<dbReference type="EMBL" id="CP000463">
    <property type="protein sequence ID" value="ABJ05388.1"/>
    <property type="molecule type" value="Genomic_DNA"/>
</dbReference>
<dbReference type="SMR" id="Q07RP6"/>
<dbReference type="STRING" id="316055.RPE_1438"/>
<dbReference type="KEGG" id="rpe:RPE_1438"/>
<dbReference type="eggNOG" id="COG0193">
    <property type="taxonomic scope" value="Bacteria"/>
</dbReference>
<dbReference type="HOGENOM" id="CLU_062456_1_0_5"/>
<dbReference type="OrthoDB" id="9800507at2"/>
<dbReference type="GO" id="GO:0005737">
    <property type="term" value="C:cytoplasm"/>
    <property type="evidence" value="ECO:0007669"/>
    <property type="project" value="UniProtKB-SubCell"/>
</dbReference>
<dbReference type="GO" id="GO:0004045">
    <property type="term" value="F:peptidyl-tRNA hydrolase activity"/>
    <property type="evidence" value="ECO:0007669"/>
    <property type="project" value="UniProtKB-UniRule"/>
</dbReference>
<dbReference type="GO" id="GO:0000049">
    <property type="term" value="F:tRNA binding"/>
    <property type="evidence" value="ECO:0007669"/>
    <property type="project" value="UniProtKB-UniRule"/>
</dbReference>
<dbReference type="GO" id="GO:0006515">
    <property type="term" value="P:protein quality control for misfolded or incompletely synthesized proteins"/>
    <property type="evidence" value="ECO:0007669"/>
    <property type="project" value="UniProtKB-UniRule"/>
</dbReference>
<dbReference type="GO" id="GO:0072344">
    <property type="term" value="P:rescue of stalled ribosome"/>
    <property type="evidence" value="ECO:0007669"/>
    <property type="project" value="UniProtKB-UniRule"/>
</dbReference>
<dbReference type="CDD" id="cd00462">
    <property type="entry name" value="PTH"/>
    <property type="match status" value="1"/>
</dbReference>
<dbReference type="FunFam" id="3.40.50.1470:FF:000001">
    <property type="entry name" value="Peptidyl-tRNA hydrolase"/>
    <property type="match status" value="1"/>
</dbReference>
<dbReference type="Gene3D" id="3.40.50.1470">
    <property type="entry name" value="Peptidyl-tRNA hydrolase"/>
    <property type="match status" value="1"/>
</dbReference>
<dbReference type="HAMAP" id="MF_00083">
    <property type="entry name" value="Pept_tRNA_hydro_bact"/>
    <property type="match status" value="1"/>
</dbReference>
<dbReference type="InterPro" id="IPR001328">
    <property type="entry name" value="Pept_tRNA_hydro"/>
</dbReference>
<dbReference type="InterPro" id="IPR018171">
    <property type="entry name" value="Pept_tRNA_hydro_CS"/>
</dbReference>
<dbReference type="InterPro" id="IPR036416">
    <property type="entry name" value="Pept_tRNA_hydro_sf"/>
</dbReference>
<dbReference type="NCBIfam" id="TIGR00447">
    <property type="entry name" value="pth"/>
    <property type="match status" value="1"/>
</dbReference>
<dbReference type="PANTHER" id="PTHR17224">
    <property type="entry name" value="PEPTIDYL-TRNA HYDROLASE"/>
    <property type="match status" value="1"/>
</dbReference>
<dbReference type="PANTHER" id="PTHR17224:SF1">
    <property type="entry name" value="PEPTIDYL-TRNA HYDROLASE"/>
    <property type="match status" value="1"/>
</dbReference>
<dbReference type="Pfam" id="PF01195">
    <property type="entry name" value="Pept_tRNA_hydro"/>
    <property type="match status" value="1"/>
</dbReference>
<dbReference type="SUPFAM" id="SSF53178">
    <property type="entry name" value="Peptidyl-tRNA hydrolase-like"/>
    <property type="match status" value="1"/>
</dbReference>
<dbReference type="PROSITE" id="PS01195">
    <property type="entry name" value="PEPT_TRNA_HYDROL_1"/>
    <property type="match status" value="1"/>
</dbReference>
<dbReference type="PROSITE" id="PS01196">
    <property type="entry name" value="PEPT_TRNA_HYDROL_2"/>
    <property type="match status" value="1"/>
</dbReference>